<accession>A7ZQJ5</accession>
<evidence type="ECO:0000250" key="1"/>
<evidence type="ECO:0000255" key="2">
    <source>
        <dbReference type="HAMAP-Rule" id="MF_00062"/>
    </source>
</evidence>
<proteinExistence type="inferred from homology"/>
<comment type="function">
    <text evidence="2">With CysD forms the ATP sulfurylase (ATPS) that catalyzes the adenylation of sulfate producing adenosine 5'-phosphosulfate (APS) and diphosphate, the first enzymatic step in sulfur assimilation pathway. APS synthesis involves the formation of a high-energy phosphoric-sulfuric acid anhydride bond driven by GTP hydrolysis by CysN coupled to ATP hydrolysis by CysD.</text>
</comment>
<comment type="catalytic activity">
    <reaction evidence="2">
        <text>sulfate + ATP + H(+) = adenosine 5'-phosphosulfate + diphosphate</text>
        <dbReference type="Rhea" id="RHEA:18133"/>
        <dbReference type="ChEBI" id="CHEBI:15378"/>
        <dbReference type="ChEBI" id="CHEBI:16189"/>
        <dbReference type="ChEBI" id="CHEBI:30616"/>
        <dbReference type="ChEBI" id="CHEBI:33019"/>
        <dbReference type="ChEBI" id="CHEBI:58243"/>
        <dbReference type="EC" id="2.7.7.4"/>
    </reaction>
</comment>
<comment type="pathway">
    <text evidence="2">Sulfur metabolism; hydrogen sulfide biosynthesis; sulfite from sulfate: step 1/3.</text>
</comment>
<comment type="subunit">
    <text evidence="2">Heterodimer composed of CysD, the smaller subunit, and CysN.</text>
</comment>
<comment type="similarity">
    <text evidence="2">Belongs to the TRAFAC class translation factor GTPase superfamily. Classic translation factor GTPase family. CysN/NodQ subfamily.</text>
</comment>
<protein>
    <recommendedName>
        <fullName evidence="2">Sulfate adenylyltransferase subunit 1</fullName>
        <ecNumber evidence="2">2.7.7.4</ecNumber>
    </recommendedName>
    <alternativeName>
        <fullName evidence="2">ATP-sulfurylase large subunit</fullName>
    </alternativeName>
    <alternativeName>
        <fullName evidence="2">Sulfate adenylate transferase</fullName>
        <shortName evidence="2">SAT</shortName>
    </alternativeName>
</protein>
<reference key="1">
    <citation type="journal article" date="2008" name="J. Bacteriol.">
        <title>The pangenome structure of Escherichia coli: comparative genomic analysis of E. coli commensal and pathogenic isolates.</title>
        <authorList>
            <person name="Rasko D.A."/>
            <person name="Rosovitz M.J."/>
            <person name="Myers G.S.A."/>
            <person name="Mongodin E.F."/>
            <person name="Fricke W.F."/>
            <person name="Gajer P."/>
            <person name="Crabtree J."/>
            <person name="Sebaihia M."/>
            <person name="Thomson N.R."/>
            <person name="Chaudhuri R."/>
            <person name="Henderson I.R."/>
            <person name="Sperandio V."/>
            <person name="Ravel J."/>
        </authorList>
    </citation>
    <scope>NUCLEOTIDE SEQUENCE [LARGE SCALE GENOMIC DNA]</scope>
    <source>
        <strain>E24377A / ETEC</strain>
    </source>
</reference>
<gene>
    <name evidence="2" type="primary">cysN</name>
    <name type="ordered locus">EcE24377A_3052</name>
</gene>
<sequence>MNTALAQQIANEGGVEAWMIAQQHKSLLRFLTCGSVDDGKSTLIGRLLHDTRQIYEDQLSSLHNDSKRHGTQGEKLDLALLVDGLQAEREQGITIDVAYRYFSTEKRKFIIADTPGHEQYTRNMATGASTCELAILLIDARKGVLDQTRRHSFISTLLGIKHLVVAINKMDLVDYSEETFTRIRKDYLTFAEQLPGNLDIRFVPLSALEGDNVASQSESMPWYSGPTLLEVLETVEIQRVVDAQPMRFPVQYVNRPNLDFRGYAGTLASGRVEVGQRVKVLPSGVESNVARIVTFDGDREEAFAGEAITLVLTDEIDISRGDLLLAADEALPAVQSASVDVVWMAEQPLSPGQSYDIKIAGKKTRARVDGIRYQVDINNLTQREVENLPLNGIGLVDLTFDEPLVLDRYQQNPVTGGLIFIDRLSNVTVGAGMVHEPVSQATAAPSEFSAFELELNALVRRHFPHWGARDLLGDK</sequence>
<feature type="chain" id="PRO_1000057427" description="Sulfate adenylyltransferase subunit 1">
    <location>
        <begin position="1"/>
        <end position="475"/>
    </location>
</feature>
<feature type="domain" description="tr-type G">
    <location>
        <begin position="25"/>
        <end position="239"/>
    </location>
</feature>
<feature type="region of interest" description="G1" evidence="1">
    <location>
        <begin position="34"/>
        <end position="41"/>
    </location>
</feature>
<feature type="region of interest" description="G2" evidence="1">
    <location>
        <begin position="92"/>
        <end position="96"/>
    </location>
</feature>
<feature type="region of interest" description="G3" evidence="1">
    <location>
        <begin position="113"/>
        <end position="116"/>
    </location>
</feature>
<feature type="region of interest" description="G4" evidence="1">
    <location>
        <begin position="168"/>
        <end position="171"/>
    </location>
</feature>
<feature type="region of interest" description="G5" evidence="1">
    <location>
        <begin position="206"/>
        <end position="208"/>
    </location>
</feature>
<feature type="binding site" evidence="2">
    <location>
        <begin position="34"/>
        <end position="41"/>
    </location>
    <ligand>
        <name>GTP</name>
        <dbReference type="ChEBI" id="CHEBI:37565"/>
    </ligand>
</feature>
<feature type="binding site" evidence="2">
    <location>
        <begin position="113"/>
        <end position="117"/>
    </location>
    <ligand>
        <name>GTP</name>
        <dbReference type="ChEBI" id="CHEBI:37565"/>
    </ligand>
</feature>
<feature type="binding site" evidence="2">
    <location>
        <begin position="168"/>
        <end position="171"/>
    </location>
    <ligand>
        <name>GTP</name>
        <dbReference type="ChEBI" id="CHEBI:37565"/>
    </ligand>
</feature>
<dbReference type="EC" id="2.7.7.4" evidence="2"/>
<dbReference type="EMBL" id="CP000800">
    <property type="protein sequence ID" value="ABV17878.1"/>
    <property type="molecule type" value="Genomic_DNA"/>
</dbReference>
<dbReference type="RefSeq" id="WP_001090383.1">
    <property type="nucleotide sequence ID" value="NC_009801.1"/>
</dbReference>
<dbReference type="SMR" id="A7ZQJ5"/>
<dbReference type="GeneID" id="75205600"/>
<dbReference type="KEGG" id="ecw:EcE24377A_3052"/>
<dbReference type="HOGENOM" id="CLU_007265_5_2_6"/>
<dbReference type="UniPathway" id="UPA00140">
    <property type="reaction ID" value="UER00204"/>
</dbReference>
<dbReference type="Proteomes" id="UP000001122">
    <property type="component" value="Chromosome"/>
</dbReference>
<dbReference type="GO" id="GO:0005524">
    <property type="term" value="F:ATP binding"/>
    <property type="evidence" value="ECO:0007669"/>
    <property type="project" value="UniProtKB-KW"/>
</dbReference>
<dbReference type="GO" id="GO:0005525">
    <property type="term" value="F:GTP binding"/>
    <property type="evidence" value="ECO:0007669"/>
    <property type="project" value="UniProtKB-UniRule"/>
</dbReference>
<dbReference type="GO" id="GO:0003924">
    <property type="term" value="F:GTPase activity"/>
    <property type="evidence" value="ECO:0007669"/>
    <property type="project" value="InterPro"/>
</dbReference>
<dbReference type="GO" id="GO:0004781">
    <property type="term" value="F:sulfate adenylyltransferase (ATP) activity"/>
    <property type="evidence" value="ECO:0007669"/>
    <property type="project" value="UniProtKB-UniRule"/>
</dbReference>
<dbReference type="GO" id="GO:0070814">
    <property type="term" value="P:hydrogen sulfide biosynthetic process"/>
    <property type="evidence" value="ECO:0007669"/>
    <property type="project" value="UniProtKB-UniRule"/>
</dbReference>
<dbReference type="GO" id="GO:0000103">
    <property type="term" value="P:sulfate assimilation"/>
    <property type="evidence" value="ECO:0007669"/>
    <property type="project" value="UniProtKB-UniRule"/>
</dbReference>
<dbReference type="CDD" id="cd04166">
    <property type="entry name" value="CysN_ATPS"/>
    <property type="match status" value="1"/>
</dbReference>
<dbReference type="CDD" id="cd03695">
    <property type="entry name" value="CysN_NodQ_II"/>
    <property type="match status" value="1"/>
</dbReference>
<dbReference type="CDD" id="cd04095">
    <property type="entry name" value="CysN_NoDQ_III"/>
    <property type="match status" value="1"/>
</dbReference>
<dbReference type="FunFam" id="2.40.30.10:FF:000027">
    <property type="entry name" value="Sulfate adenylyltransferase subunit 1"/>
    <property type="match status" value="1"/>
</dbReference>
<dbReference type="FunFam" id="2.40.30.10:FF:000031">
    <property type="entry name" value="Sulfate adenylyltransferase subunit 1"/>
    <property type="match status" value="1"/>
</dbReference>
<dbReference type="FunFam" id="3.40.50.300:FF:000119">
    <property type="entry name" value="Sulfate adenylyltransferase subunit 1"/>
    <property type="match status" value="1"/>
</dbReference>
<dbReference type="Gene3D" id="3.40.50.300">
    <property type="entry name" value="P-loop containing nucleotide triphosphate hydrolases"/>
    <property type="match status" value="1"/>
</dbReference>
<dbReference type="Gene3D" id="2.40.30.10">
    <property type="entry name" value="Translation factors"/>
    <property type="match status" value="2"/>
</dbReference>
<dbReference type="HAMAP" id="MF_00062">
    <property type="entry name" value="Sulf_adenylyltr_sub1"/>
    <property type="match status" value="1"/>
</dbReference>
<dbReference type="InterPro" id="IPR041757">
    <property type="entry name" value="CysN_GTP-bd"/>
</dbReference>
<dbReference type="InterPro" id="IPR044138">
    <property type="entry name" value="CysN_II"/>
</dbReference>
<dbReference type="InterPro" id="IPR044139">
    <property type="entry name" value="CysN_NoDQ_III"/>
</dbReference>
<dbReference type="InterPro" id="IPR031157">
    <property type="entry name" value="G_TR_CS"/>
</dbReference>
<dbReference type="InterPro" id="IPR054696">
    <property type="entry name" value="GTP-eEF1A_C"/>
</dbReference>
<dbReference type="InterPro" id="IPR027417">
    <property type="entry name" value="P-loop_NTPase"/>
</dbReference>
<dbReference type="InterPro" id="IPR005225">
    <property type="entry name" value="Small_GTP-bd"/>
</dbReference>
<dbReference type="InterPro" id="IPR011779">
    <property type="entry name" value="SO4_adenylTrfase_lsu"/>
</dbReference>
<dbReference type="InterPro" id="IPR000795">
    <property type="entry name" value="T_Tr_GTP-bd_dom"/>
</dbReference>
<dbReference type="InterPro" id="IPR050100">
    <property type="entry name" value="TRAFAC_GTPase_members"/>
</dbReference>
<dbReference type="InterPro" id="IPR009000">
    <property type="entry name" value="Transl_B-barrel_sf"/>
</dbReference>
<dbReference type="InterPro" id="IPR009001">
    <property type="entry name" value="Transl_elong_EF1A/Init_IF2_C"/>
</dbReference>
<dbReference type="NCBIfam" id="TIGR02034">
    <property type="entry name" value="CysN"/>
    <property type="match status" value="1"/>
</dbReference>
<dbReference type="NCBIfam" id="NF003478">
    <property type="entry name" value="PRK05124.1"/>
    <property type="match status" value="1"/>
</dbReference>
<dbReference type="NCBIfam" id="TIGR00231">
    <property type="entry name" value="small_GTP"/>
    <property type="match status" value="1"/>
</dbReference>
<dbReference type="PANTHER" id="PTHR23115">
    <property type="entry name" value="TRANSLATION FACTOR"/>
    <property type="match status" value="1"/>
</dbReference>
<dbReference type="Pfam" id="PF22594">
    <property type="entry name" value="GTP-eEF1A_C"/>
    <property type="match status" value="1"/>
</dbReference>
<dbReference type="Pfam" id="PF00009">
    <property type="entry name" value="GTP_EFTU"/>
    <property type="match status" value="1"/>
</dbReference>
<dbReference type="PRINTS" id="PR00315">
    <property type="entry name" value="ELONGATNFCT"/>
</dbReference>
<dbReference type="SUPFAM" id="SSF50465">
    <property type="entry name" value="EF-Tu/eEF-1alpha/eIF2-gamma C-terminal domain"/>
    <property type="match status" value="1"/>
</dbReference>
<dbReference type="SUPFAM" id="SSF52540">
    <property type="entry name" value="P-loop containing nucleoside triphosphate hydrolases"/>
    <property type="match status" value="1"/>
</dbReference>
<dbReference type="SUPFAM" id="SSF50447">
    <property type="entry name" value="Translation proteins"/>
    <property type="match status" value="1"/>
</dbReference>
<dbReference type="PROSITE" id="PS00301">
    <property type="entry name" value="G_TR_1"/>
    <property type="match status" value="1"/>
</dbReference>
<dbReference type="PROSITE" id="PS51722">
    <property type="entry name" value="G_TR_2"/>
    <property type="match status" value="1"/>
</dbReference>
<organism>
    <name type="scientific">Escherichia coli O139:H28 (strain E24377A / ETEC)</name>
    <dbReference type="NCBI Taxonomy" id="331111"/>
    <lineage>
        <taxon>Bacteria</taxon>
        <taxon>Pseudomonadati</taxon>
        <taxon>Pseudomonadota</taxon>
        <taxon>Gammaproteobacteria</taxon>
        <taxon>Enterobacterales</taxon>
        <taxon>Enterobacteriaceae</taxon>
        <taxon>Escherichia</taxon>
    </lineage>
</organism>
<keyword id="KW-0067">ATP-binding</keyword>
<keyword id="KW-0342">GTP-binding</keyword>
<keyword id="KW-0547">Nucleotide-binding</keyword>
<keyword id="KW-0548">Nucleotidyltransferase</keyword>
<keyword id="KW-1185">Reference proteome</keyword>
<keyword id="KW-0808">Transferase</keyword>
<name>CYSN_ECO24</name>